<keyword id="KW-0328">Glycosyltransferase</keyword>
<keyword id="KW-0479">Metal-binding</keyword>
<keyword id="KW-0671">Queuosine biosynthesis</keyword>
<keyword id="KW-0808">Transferase</keyword>
<keyword id="KW-0819">tRNA processing</keyword>
<keyword id="KW-0862">Zinc</keyword>
<protein>
    <recommendedName>
        <fullName evidence="1">Queuine tRNA-ribosyltransferase</fullName>
        <ecNumber evidence="1">2.4.2.29</ecNumber>
    </recommendedName>
    <alternativeName>
        <fullName evidence="1">Guanine insertion enzyme</fullName>
    </alternativeName>
    <alternativeName>
        <fullName evidence="1">tRNA-guanine transglycosylase</fullName>
    </alternativeName>
</protein>
<comment type="function">
    <text evidence="1">Catalyzes the base-exchange of a guanine (G) residue with the queuine precursor 7-aminomethyl-7-deazaguanine (PreQ1) at position 34 (anticodon wobble position) in tRNAs with GU(N) anticodons (tRNA-Asp, -Asn, -His and -Tyr). Catalysis occurs through a double-displacement mechanism. The nucleophile active site attacks the C1' of nucleotide 34 to detach the guanine base from the RNA, forming a covalent enzyme-RNA intermediate. The proton acceptor active site deprotonates the incoming PreQ1, allowing a nucleophilic attack on the C1' of the ribose to form the product. After dissociation, two additional enzymatic reactions on the tRNA convert PreQ1 to queuine (Q), resulting in the hypermodified nucleoside queuosine (7-(((4,5-cis-dihydroxy-2-cyclopenten-1-yl)amino)methyl)-7-deazaguanosine).</text>
</comment>
<comment type="catalytic activity">
    <reaction evidence="1">
        <text>7-aminomethyl-7-carbaguanine + guanosine(34) in tRNA = 7-aminomethyl-7-carbaguanosine(34) in tRNA + guanine</text>
        <dbReference type="Rhea" id="RHEA:24104"/>
        <dbReference type="Rhea" id="RHEA-COMP:10341"/>
        <dbReference type="Rhea" id="RHEA-COMP:10342"/>
        <dbReference type="ChEBI" id="CHEBI:16235"/>
        <dbReference type="ChEBI" id="CHEBI:58703"/>
        <dbReference type="ChEBI" id="CHEBI:74269"/>
        <dbReference type="ChEBI" id="CHEBI:82833"/>
        <dbReference type="EC" id="2.4.2.29"/>
    </reaction>
</comment>
<comment type="cofactor">
    <cofactor evidence="1">
        <name>Zn(2+)</name>
        <dbReference type="ChEBI" id="CHEBI:29105"/>
    </cofactor>
    <text evidence="1">Binds 1 zinc ion per subunit.</text>
</comment>
<comment type="pathway">
    <text evidence="1">tRNA modification; tRNA-queuosine biosynthesis.</text>
</comment>
<comment type="subunit">
    <text evidence="1">Homodimer. Within each dimer, one monomer is responsible for RNA recognition and catalysis, while the other monomer binds to the replacement base PreQ1.</text>
</comment>
<comment type="similarity">
    <text evidence="1">Belongs to the queuine tRNA-ribosyltransferase family.</text>
</comment>
<accession>Q6FEJ4</accession>
<evidence type="ECO:0000255" key="1">
    <source>
        <dbReference type="HAMAP-Rule" id="MF_00168"/>
    </source>
</evidence>
<dbReference type="EC" id="2.4.2.29" evidence="1"/>
<dbReference type="EMBL" id="CR543861">
    <property type="protein sequence ID" value="CAG67514.1"/>
    <property type="molecule type" value="Genomic_DNA"/>
</dbReference>
<dbReference type="SMR" id="Q6FEJ4"/>
<dbReference type="STRING" id="202950.GCA_001485005_00826"/>
<dbReference type="KEGG" id="aci:ACIAD0590"/>
<dbReference type="eggNOG" id="COG0343">
    <property type="taxonomic scope" value="Bacteria"/>
</dbReference>
<dbReference type="HOGENOM" id="CLU_022060_0_1_6"/>
<dbReference type="UniPathway" id="UPA00392"/>
<dbReference type="Proteomes" id="UP000000430">
    <property type="component" value="Chromosome"/>
</dbReference>
<dbReference type="GO" id="GO:0005829">
    <property type="term" value="C:cytosol"/>
    <property type="evidence" value="ECO:0007669"/>
    <property type="project" value="TreeGrafter"/>
</dbReference>
<dbReference type="GO" id="GO:0046872">
    <property type="term" value="F:metal ion binding"/>
    <property type="evidence" value="ECO:0007669"/>
    <property type="project" value="UniProtKB-KW"/>
</dbReference>
<dbReference type="GO" id="GO:0008479">
    <property type="term" value="F:tRNA-guanosine(34) queuine transglycosylase activity"/>
    <property type="evidence" value="ECO:0007669"/>
    <property type="project" value="UniProtKB-UniRule"/>
</dbReference>
<dbReference type="GO" id="GO:0008616">
    <property type="term" value="P:queuosine biosynthetic process"/>
    <property type="evidence" value="ECO:0007669"/>
    <property type="project" value="UniProtKB-UniRule"/>
</dbReference>
<dbReference type="GO" id="GO:0002099">
    <property type="term" value="P:tRNA wobble guanine modification"/>
    <property type="evidence" value="ECO:0007669"/>
    <property type="project" value="TreeGrafter"/>
</dbReference>
<dbReference type="GO" id="GO:0101030">
    <property type="term" value="P:tRNA-guanine transglycosylation"/>
    <property type="evidence" value="ECO:0007669"/>
    <property type="project" value="InterPro"/>
</dbReference>
<dbReference type="FunFam" id="3.20.20.105:FF:000001">
    <property type="entry name" value="Queuine tRNA-ribosyltransferase"/>
    <property type="match status" value="1"/>
</dbReference>
<dbReference type="Gene3D" id="3.20.20.105">
    <property type="entry name" value="Queuine tRNA-ribosyltransferase-like"/>
    <property type="match status" value="1"/>
</dbReference>
<dbReference type="HAMAP" id="MF_00168">
    <property type="entry name" value="Q_tRNA_Tgt"/>
    <property type="match status" value="1"/>
</dbReference>
<dbReference type="InterPro" id="IPR050076">
    <property type="entry name" value="ArchSynthase1/Queuine_TRR"/>
</dbReference>
<dbReference type="InterPro" id="IPR004803">
    <property type="entry name" value="TGT"/>
</dbReference>
<dbReference type="InterPro" id="IPR036511">
    <property type="entry name" value="TGT-like_sf"/>
</dbReference>
<dbReference type="InterPro" id="IPR002616">
    <property type="entry name" value="tRNA_ribo_trans-like"/>
</dbReference>
<dbReference type="NCBIfam" id="TIGR00430">
    <property type="entry name" value="Q_tRNA_tgt"/>
    <property type="match status" value="1"/>
</dbReference>
<dbReference type="NCBIfam" id="TIGR00449">
    <property type="entry name" value="tgt_general"/>
    <property type="match status" value="1"/>
</dbReference>
<dbReference type="PANTHER" id="PTHR46499">
    <property type="entry name" value="QUEUINE TRNA-RIBOSYLTRANSFERASE"/>
    <property type="match status" value="1"/>
</dbReference>
<dbReference type="PANTHER" id="PTHR46499:SF1">
    <property type="entry name" value="QUEUINE TRNA-RIBOSYLTRANSFERASE"/>
    <property type="match status" value="1"/>
</dbReference>
<dbReference type="Pfam" id="PF01702">
    <property type="entry name" value="TGT"/>
    <property type="match status" value="1"/>
</dbReference>
<dbReference type="SUPFAM" id="SSF51713">
    <property type="entry name" value="tRNA-guanine transglycosylase"/>
    <property type="match status" value="1"/>
</dbReference>
<feature type="chain" id="PRO_0000135439" description="Queuine tRNA-ribosyltransferase">
    <location>
        <begin position="1"/>
        <end position="386"/>
    </location>
</feature>
<feature type="region of interest" description="RNA binding" evidence="1">
    <location>
        <begin position="256"/>
        <end position="262"/>
    </location>
</feature>
<feature type="region of interest" description="RNA binding; important for wobble base 34 recognition" evidence="1">
    <location>
        <begin position="280"/>
        <end position="284"/>
    </location>
</feature>
<feature type="active site" description="Proton acceptor" evidence="1">
    <location>
        <position position="99"/>
    </location>
</feature>
<feature type="active site" description="Nucleophile" evidence="1">
    <location>
        <position position="275"/>
    </location>
</feature>
<feature type="binding site" evidence="1">
    <location>
        <begin position="99"/>
        <end position="103"/>
    </location>
    <ligand>
        <name>substrate</name>
    </ligand>
</feature>
<feature type="binding site" evidence="1">
    <location>
        <position position="153"/>
    </location>
    <ligand>
        <name>substrate</name>
    </ligand>
</feature>
<feature type="binding site" evidence="1">
    <location>
        <position position="198"/>
    </location>
    <ligand>
        <name>substrate</name>
    </ligand>
</feature>
<feature type="binding site" evidence="1">
    <location>
        <position position="225"/>
    </location>
    <ligand>
        <name>substrate</name>
    </ligand>
</feature>
<feature type="binding site" evidence="1">
    <location>
        <position position="313"/>
    </location>
    <ligand>
        <name>Zn(2+)</name>
        <dbReference type="ChEBI" id="CHEBI:29105"/>
    </ligand>
</feature>
<feature type="binding site" evidence="1">
    <location>
        <position position="315"/>
    </location>
    <ligand>
        <name>Zn(2+)</name>
        <dbReference type="ChEBI" id="CHEBI:29105"/>
    </ligand>
</feature>
<feature type="binding site" evidence="1">
    <location>
        <position position="318"/>
    </location>
    <ligand>
        <name>Zn(2+)</name>
        <dbReference type="ChEBI" id="CHEBI:29105"/>
    </ligand>
</feature>
<feature type="binding site" evidence="1">
    <location>
        <position position="344"/>
    </location>
    <ligand>
        <name>Zn(2+)</name>
        <dbReference type="ChEBI" id="CHEBI:29105"/>
    </ligand>
</feature>
<organism>
    <name type="scientific">Acinetobacter baylyi (strain ATCC 33305 / BD413 / ADP1)</name>
    <dbReference type="NCBI Taxonomy" id="62977"/>
    <lineage>
        <taxon>Bacteria</taxon>
        <taxon>Pseudomonadati</taxon>
        <taxon>Pseudomonadota</taxon>
        <taxon>Gammaproteobacteria</taxon>
        <taxon>Moraxellales</taxon>
        <taxon>Moraxellaceae</taxon>
        <taxon>Acinetobacter</taxon>
    </lineage>
</organism>
<sequence length="386" mass="43951">MFFRLDLESCMKFEKLGQSGRARRGRLTLAHGVVETPVFMPVGTYGTVKGMLPRDIEEIQAQIILGNTFHLYLRPGLEVIKEHGGLHEFIKWDKPILTDSGGFQVFSLGAMRKIKEEGVTFRSPIDGSKVFLSPEISMEIQQVLNSDIVMIFDECTPYPATHEEAQKSLQLSLRWAKRCKTHHHEQLNNTNALFGIIQGGMYEDLRDESLNGLLEIGFDGYAIGGLSVGEPKEEMIKVLDYLPAKMPEDKPRYLMGVGKPEDIVEAVRRGVDMFDCVMPTRNARNGHYFVTDGLVRIRNSKYRHDQSPLDPHCDCYTCKNFTRAYLYHLEKCGEMLASMLGTIHNLRYYQRLTQGIRDALEQGTFDEFVTDFYTRRGLDVPPAPVD</sequence>
<gene>
    <name evidence="1" type="primary">tgt</name>
    <name type="ordered locus">ACIAD0590</name>
</gene>
<name>TGT_ACIAD</name>
<reference key="1">
    <citation type="journal article" date="2004" name="Nucleic Acids Res.">
        <title>Unique features revealed by the genome sequence of Acinetobacter sp. ADP1, a versatile and naturally transformation competent bacterium.</title>
        <authorList>
            <person name="Barbe V."/>
            <person name="Vallenet D."/>
            <person name="Fonknechten N."/>
            <person name="Kreimeyer A."/>
            <person name="Oztas S."/>
            <person name="Labarre L."/>
            <person name="Cruveiller S."/>
            <person name="Robert C."/>
            <person name="Duprat S."/>
            <person name="Wincker P."/>
            <person name="Ornston L.N."/>
            <person name="Weissenbach J."/>
            <person name="Marliere P."/>
            <person name="Cohen G.N."/>
            <person name="Medigue C."/>
        </authorList>
    </citation>
    <scope>NUCLEOTIDE SEQUENCE [LARGE SCALE GENOMIC DNA]</scope>
    <source>
        <strain>ATCC 33305 / BD413 / ADP1</strain>
    </source>
</reference>
<proteinExistence type="inferred from homology"/>